<dbReference type="EMBL" id="AE016825">
    <property type="protein sequence ID" value="AAQ60401.1"/>
    <property type="molecule type" value="Genomic_DNA"/>
</dbReference>
<dbReference type="KEGG" id="cvi:CV_2731"/>
<dbReference type="eggNOG" id="COG3158">
    <property type="taxonomic scope" value="Bacteria"/>
</dbReference>
<dbReference type="HOGENOM" id="CLU_008142_4_2_4"/>
<dbReference type="OrthoDB" id="8594991at2"/>
<dbReference type="Proteomes" id="UP000001424">
    <property type="component" value="Chromosome"/>
</dbReference>
<dbReference type="GO" id="GO:0005886">
    <property type="term" value="C:plasma membrane"/>
    <property type="evidence" value="ECO:0007669"/>
    <property type="project" value="UniProtKB-SubCell"/>
</dbReference>
<dbReference type="GO" id="GO:0015079">
    <property type="term" value="F:potassium ion transmembrane transporter activity"/>
    <property type="evidence" value="ECO:0007669"/>
    <property type="project" value="UniProtKB-UniRule"/>
</dbReference>
<dbReference type="GO" id="GO:0015293">
    <property type="term" value="F:symporter activity"/>
    <property type="evidence" value="ECO:0007669"/>
    <property type="project" value="UniProtKB-UniRule"/>
</dbReference>
<dbReference type="HAMAP" id="MF_01522">
    <property type="entry name" value="Kup"/>
    <property type="match status" value="1"/>
</dbReference>
<dbReference type="InterPro" id="IPR003855">
    <property type="entry name" value="K+_transporter"/>
</dbReference>
<dbReference type="InterPro" id="IPR053952">
    <property type="entry name" value="K_trans_C"/>
</dbReference>
<dbReference type="InterPro" id="IPR053951">
    <property type="entry name" value="K_trans_N"/>
</dbReference>
<dbReference type="InterPro" id="IPR023051">
    <property type="entry name" value="Kup"/>
</dbReference>
<dbReference type="PANTHER" id="PTHR30540:SF79">
    <property type="entry name" value="LOW AFFINITY POTASSIUM TRANSPORT SYSTEM PROTEIN KUP"/>
    <property type="match status" value="1"/>
</dbReference>
<dbReference type="PANTHER" id="PTHR30540">
    <property type="entry name" value="OSMOTIC STRESS POTASSIUM TRANSPORTER"/>
    <property type="match status" value="1"/>
</dbReference>
<dbReference type="Pfam" id="PF02705">
    <property type="entry name" value="K_trans"/>
    <property type="match status" value="1"/>
</dbReference>
<dbReference type="Pfam" id="PF22776">
    <property type="entry name" value="K_trans_C"/>
    <property type="match status" value="1"/>
</dbReference>
<keyword id="KW-0997">Cell inner membrane</keyword>
<keyword id="KW-1003">Cell membrane</keyword>
<keyword id="KW-0406">Ion transport</keyword>
<keyword id="KW-0472">Membrane</keyword>
<keyword id="KW-0630">Potassium</keyword>
<keyword id="KW-0633">Potassium transport</keyword>
<keyword id="KW-1185">Reference proteome</keyword>
<keyword id="KW-0769">Symport</keyword>
<keyword id="KW-0812">Transmembrane</keyword>
<keyword id="KW-1133">Transmembrane helix</keyword>
<keyword id="KW-0813">Transport</keyword>
<gene>
    <name evidence="1" type="primary">kup1</name>
    <name type="ordered locus">CV_2731</name>
</gene>
<organism>
    <name type="scientific">Chromobacterium violaceum (strain ATCC 12472 / DSM 30191 / JCM 1249 / CCUG 213 / NBRC 12614 / NCIMB 9131 / NCTC 9757 / MK)</name>
    <dbReference type="NCBI Taxonomy" id="243365"/>
    <lineage>
        <taxon>Bacteria</taxon>
        <taxon>Pseudomonadati</taxon>
        <taxon>Pseudomonadota</taxon>
        <taxon>Betaproteobacteria</taxon>
        <taxon>Neisseriales</taxon>
        <taxon>Chromobacteriaceae</taxon>
        <taxon>Chromobacterium</taxon>
    </lineage>
</organism>
<reference key="1">
    <citation type="journal article" date="2003" name="Proc. Natl. Acad. Sci. U.S.A.">
        <title>The complete genome sequence of Chromobacterium violaceum reveals remarkable and exploitable bacterial adaptability.</title>
        <authorList>
            <person name="Vasconcelos A.T.R."/>
            <person name="de Almeida D.F."/>
            <person name="Hungria M."/>
            <person name="Guimaraes C.T."/>
            <person name="Antonio R.V."/>
            <person name="Almeida F.C."/>
            <person name="de Almeida L.G.P."/>
            <person name="de Almeida R."/>
            <person name="Alves-Gomes J.A."/>
            <person name="Andrade E.M."/>
            <person name="Araripe J."/>
            <person name="de Araujo M.F.F."/>
            <person name="Astolfi-Filho S."/>
            <person name="Azevedo V."/>
            <person name="Baptista A.J."/>
            <person name="Bataus L.A.M."/>
            <person name="Batista J.S."/>
            <person name="Belo A."/>
            <person name="van den Berg C."/>
            <person name="Bogo M."/>
            <person name="Bonatto S."/>
            <person name="Bordignon J."/>
            <person name="Brigido M.M."/>
            <person name="Brito C.A."/>
            <person name="Brocchi M."/>
            <person name="Burity H.A."/>
            <person name="Camargo A.A."/>
            <person name="Cardoso D.D.P."/>
            <person name="Carneiro N.P."/>
            <person name="Carraro D.M."/>
            <person name="Carvalho C.M.B."/>
            <person name="Cascardo J.C.M."/>
            <person name="Cavada B.S."/>
            <person name="Chueire L.M.O."/>
            <person name="Creczynski-Pasa T.B."/>
            <person name="Cunha-Junior N.C."/>
            <person name="Fagundes N."/>
            <person name="Falcao C.L."/>
            <person name="Fantinatti F."/>
            <person name="Farias I.P."/>
            <person name="Felipe M.S.S."/>
            <person name="Ferrari L.P."/>
            <person name="Ferro J.A."/>
            <person name="Ferro M.I.T."/>
            <person name="Franco G.R."/>
            <person name="Freitas N.S.A."/>
            <person name="Furlan L.R."/>
            <person name="Gazzinelli R.T."/>
            <person name="Gomes E.A."/>
            <person name="Goncalves P.R."/>
            <person name="Grangeiro T.B."/>
            <person name="Grattapaglia D."/>
            <person name="Grisard E.C."/>
            <person name="Hanna E.S."/>
            <person name="Jardim S.N."/>
            <person name="Laurino J."/>
            <person name="Leoi L.C.T."/>
            <person name="Lima L.F.A."/>
            <person name="Loureiro M.F."/>
            <person name="Lyra M.C.C.P."/>
            <person name="Madeira H.M.F."/>
            <person name="Manfio G.P."/>
            <person name="Maranhao A.Q."/>
            <person name="Martins W.S."/>
            <person name="di Mauro S.M.Z."/>
            <person name="de Medeiros S.R.B."/>
            <person name="Meissner R.V."/>
            <person name="Moreira M.A.M."/>
            <person name="Nascimento F.F."/>
            <person name="Nicolas M.F."/>
            <person name="Oliveira J.G."/>
            <person name="Oliveira S.C."/>
            <person name="Paixao R.F.C."/>
            <person name="Parente J.A."/>
            <person name="Pedrosa F.O."/>
            <person name="Pena S.D.J."/>
            <person name="Pereira J.O."/>
            <person name="Pereira M."/>
            <person name="Pinto L.S.R.C."/>
            <person name="Pinto L.S."/>
            <person name="Porto J.I.R."/>
            <person name="Potrich D.P."/>
            <person name="Ramalho-Neto C.E."/>
            <person name="Reis A.M.M."/>
            <person name="Rigo L.U."/>
            <person name="Rondinelli E."/>
            <person name="Santos E.B.P."/>
            <person name="Santos F.R."/>
            <person name="Schneider M.P.C."/>
            <person name="Seuanez H.N."/>
            <person name="Silva A.M.R."/>
            <person name="da Silva A.L.C."/>
            <person name="Silva D.W."/>
            <person name="Silva R."/>
            <person name="Simoes I.C."/>
            <person name="Simon D."/>
            <person name="Soares C.M.A."/>
            <person name="Soares R.B.A."/>
            <person name="Souza E.M."/>
            <person name="Souza K.R.L."/>
            <person name="Souza R.C."/>
            <person name="Steffens M.B.R."/>
            <person name="Steindel M."/>
            <person name="Teixeira S.R."/>
            <person name="Urmenyi T."/>
            <person name="Vettore A."/>
            <person name="Wassem R."/>
            <person name="Zaha A."/>
            <person name="Simpson A.J.G."/>
        </authorList>
    </citation>
    <scope>NUCLEOTIDE SEQUENCE [LARGE SCALE GENOMIC DNA]</scope>
    <source>
        <strain>ATCC 12472 / DSM 30191 / JCM 1249 / CCUG 213 / NBRC 12614 / NCIMB 9131 / NCTC 9757 / MK</strain>
    </source>
</reference>
<protein>
    <recommendedName>
        <fullName evidence="1">Probable potassium transport system protein Kup 1</fullName>
    </recommendedName>
</protein>
<comment type="function">
    <text evidence="1">Transport of potassium into the cell. Likely operates as a K(+):H(+) symporter.</text>
</comment>
<comment type="catalytic activity">
    <reaction evidence="1">
        <text>K(+)(in) + H(+)(in) = K(+)(out) + H(+)(out)</text>
        <dbReference type="Rhea" id="RHEA:28490"/>
        <dbReference type="ChEBI" id="CHEBI:15378"/>
        <dbReference type="ChEBI" id="CHEBI:29103"/>
    </reaction>
    <physiologicalReaction direction="right-to-left" evidence="1">
        <dbReference type="Rhea" id="RHEA:28492"/>
    </physiologicalReaction>
</comment>
<comment type="subcellular location">
    <subcellularLocation>
        <location evidence="1">Cell inner membrane</location>
        <topology evidence="1">Multi-pass membrane protein</topology>
    </subcellularLocation>
</comment>
<comment type="similarity">
    <text evidence="1">Belongs to the HAK/KUP transporter (TC 2.A.72) family.</text>
</comment>
<proteinExistence type="inferred from homology"/>
<name>KUP1_CHRVO</name>
<sequence length="640" mass="68440">MSAGYRSMAISASDRERGQQSMAMLVLAALGVVYGDLGTSPLYALQEAFNGDHGVRPTPDNVVGVVSLFLWSLILMVSVKYVMVLMRADNKGEGGILALLAQITGGRSGDGRRVAVGWVLLGLAGAAMLYGDGVITPAVSVLSAMEGLQVATPALAAYVVPATVVILAMLFMIQPFGSGRVGAAFGPILAAWFVAIAALGLAQLWRNPAILQAVNPWHGIAYFQRNGFAGFVSLGAVVLCLTGAEALYADMGHFGARPIRLAWYGLALPALILSYLGQGALLLAHPQLSGRPFYSMVPEWGLLPMVALSTLATIVASQALITAVFSLTHQSAQLGFFPRVKVLHTSGSHKGQIYLPLLNWTLMLATIAVVLGFRESGKLAAAFGLAVSTTMAITTVLFAVLARRRWHWPWWAVALVAGSLFAIDLAFWLANALKFLDGGWLPLLLGLAVFCVMGCWFGGRRLQMRESRGRQLPLEALLSSLGMNPVARIPGVGVFLSERADGTPLVLLHHLKHNQALHETAILLTLQMLDVPRAAGERVSAQWLGQGMARVTARYGYMEEPDVPEAMARAAEALGLPPLEPLSTSYYLGRQTLVAAPGSGGLKRWLVGVFAFLRQNERSATLYFGLPPNRVVELGARIEL</sequence>
<accession>Q7NUG7</accession>
<evidence type="ECO:0000255" key="1">
    <source>
        <dbReference type="HAMAP-Rule" id="MF_01522"/>
    </source>
</evidence>
<feature type="chain" id="PRO_0000209008" description="Probable potassium transport system protein Kup 1">
    <location>
        <begin position="1"/>
        <end position="640"/>
    </location>
</feature>
<feature type="transmembrane region" description="Helical" evidence="1">
    <location>
        <begin position="25"/>
        <end position="45"/>
    </location>
</feature>
<feature type="transmembrane region" description="Helical" evidence="1">
    <location>
        <begin position="65"/>
        <end position="85"/>
    </location>
</feature>
<feature type="transmembrane region" description="Helical" evidence="1">
    <location>
        <begin position="115"/>
        <end position="135"/>
    </location>
</feature>
<feature type="transmembrane region" description="Helical" evidence="1">
    <location>
        <begin position="153"/>
        <end position="173"/>
    </location>
</feature>
<feature type="transmembrane region" description="Helical" evidence="1">
    <location>
        <begin position="181"/>
        <end position="201"/>
    </location>
</feature>
<feature type="transmembrane region" description="Helical" evidence="1">
    <location>
        <begin position="227"/>
        <end position="247"/>
    </location>
</feature>
<feature type="transmembrane region" description="Helical" evidence="1">
    <location>
        <begin position="263"/>
        <end position="283"/>
    </location>
</feature>
<feature type="transmembrane region" description="Helical" evidence="1">
    <location>
        <begin position="305"/>
        <end position="325"/>
    </location>
</feature>
<feature type="transmembrane region" description="Helical" evidence="1">
    <location>
        <begin position="353"/>
        <end position="373"/>
    </location>
</feature>
<feature type="transmembrane region" description="Helical" evidence="1">
    <location>
        <begin position="381"/>
        <end position="401"/>
    </location>
</feature>
<feature type="transmembrane region" description="Helical" evidence="1">
    <location>
        <begin position="410"/>
        <end position="430"/>
    </location>
</feature>
<feature type="transmembrane region" description="Helical" evidence="1">
    <location>
        <begin position="438"/>
        <end position="458"/>
    </location>
</feature>